<accession>Q8CNK1</accession>
<reference key="1">
    <citation type="journal article" date="2003" name="Mol. Microbiol.">
        <title>Genome-based analysis of virulence genes in a non-biofilm-forming Staphylococcus epidermidis strain (ATCC 12228).</title>
        <authorList>
            <person name="Zhang Y.-Q."/>
            <person name="Ren S.-X."/>
            <person name="Li H.-L."/>
            <person name="Wang Y.-X."/>
            <person name="Fu G."/>
            <person name="Yang J."/>
            <person name="Qin Z.-Q."/>
            <person name="Miao Y.-G."/>
            <person name="Wang W.-Y."/>
            <person name="Chen R.-S."/>
            <person name="Shen Y."/>
            <person name="Chen Z."/>
            <person name="Yuan Z.-H."/>
            <person name="Zhao G.-P."/>
            <person name="Qu D."/>
            <person name="Danchin A."/>
            <person name="Wen Y.-M."/>
        </authorList>
    </citation>
    <scope>NUCLEOTIDE SEQUENCE [LARGE SCALE GENOMIC DNA]</scope>
    <source>
        <strain>ATCC 12228 / FDA PCI 1200</strain>
    </source>
</reference>
<reference key="2">
    <citation type="submission" date="2010-06" db="PDB data bank">
        <title>Crystal structure of a putative thiaminase II (SE1693) from Staphylococcus epidermidis ATCC 12228 at 1.65 A resolution.</title>
        <authorList>
            <consortium name="Joint center for structural genomics (JCSG)"/>
        </authorList>
    </citation>
    <scope>X-RAY CRYSTALLOGRAPHY (1.65 ANGSTROMS)</scope>
    <scope>SUBUNIT</scope>
    <source>
        <strain>ATCC 12228 / FDA PCI 1200</strain>
    </source>
</reference>
<name>TENA_STAES</name>
<keyword id="KW-0002">3D-structure</keyword>
<keyword id="KW-0378">Hydrolase</keyword>
<keyword id="KW-0784">Thiamine biosynthesis</keyword>
<sequence length="229" mass="26900">MTFSKELREASRPIIDDIYNDGFIQDLLAGKLSNQAVRQYLRADASYLKEFTNIYAMLIPKMSSMEDVKFLVEQIEFMLEGEVEAHEVLADFINEPYEEIVKEKVWPPSGDHYIKHMYFNAFARENAAFTIAAMAPCPYVYAVIGKRAMEDPKLNKESVTSKWFQFYSTEMDELVDVFDQLMDRLTKHCSETEKKEIKENFLQSTIHERHFFNMAYINEKWEYGGNNNE</sequence>
<evidence type="ECO:0000250" key="1">
    <source>
        <dbReference type="UniProtKB" id="P25052"/>
    </source>
</evidence>
<evidence type="ECO:0000250" key="2">
    <source>
        <dbReference type="UniProtKB" id="Q6GEY1"/>
    </source>
</evidence>
<evidence type="ECO:0000269" key="3">
    <source ref="2"/>
</evidence>
<evidence type="ECO:0000305" key="4"/>
<evidence type="ECO:0007829" key="5">
    <source>
        <dbReference type="PDB" id="3NO6"/>
    </source>
</evidence>
<proteinExistence type="evidence at protein level"/>
<gene>
    <name type="primary">tenA</name>
    <name type="ordered locus">SE_1693</name>
</gene>
<dbReference type="EC" id="3.5.99.2" evidence="2"/>
<dbReference type="EMBL" id="AE015929">
    <property type="protein sequence ID" value="AAO05292.1"/>
    <property type="molecule type" value="Genomic_DNA"/>
</dbReference>
<dbReference type="RefSeq" id="NP_765248.1">
    <property type="nucleotide sequence ID" value="NC_004461.1"/>
</dbReference>
<dbReference type="RefSeq" id="WP_001829894.1">
    <property type="nucleotide sequence ID" value="NZ_WBME01000021.1"/>
</dbReference>
<dbReference type="PDB" id="3NO6">
    <property type="method" value="X-ray"/>
    <property type="resolution" value="1.65 A"/>
    <property type="chains" value="A/B/C/D=1-229"/>
</dbReference>
<dbReference type="PDBsum" id="3NO6"/>
<dbReference type="SMR" id="Q8CNK1"/>
<dbReference type="DNASU" id="1057810"/>
<dbReference type="GeneID" id="50018207"/>
<dbReference type="KEGG" id="sep:SE_1693"/>
<dbReference type="PATRIC" id="fig|176280.10.peg.1653"/>
<dbReference type="eggNOG" id="COG0819">
    <property type="taxonomic scope" value="Bacteria"/>
</dbReference>
<dbReference type="HOGENOM" id="CLU_077537_3_1_9"/>
<dbReference type="OrthoDB" id="34166at2"/>
<dbReference type="UniPathway" id="UPA00060"/>
<dbReference type="EvolutionaryTrace" id="Q8CNK1"/>
<dbReference type="Proteomes" id="UP000001411">
    <property type="component" value="Chromosome"/>
</dbReference>
<dbReference type="GO" id="GO:0005829">
    <property type="term" value="C:cytosol"/>
    <property type="evidence" value="ECO:0007669"/>
    <property type="project" value="TreeGrafter"/>
</dbReference>
<dbReference type="GO" id="GO:0050334">
    <property type="term" value="F:thiaminase activity"/>
    <property type="evidence" value="ECO:0007669"/>
    <property type="project" value="UniProtKB-EC"/>
</dbReference>
<dbReference type="GO" id="GO:0009228">
    <property type="term" value="P:thiamine biosynthetic process"/>
    <property type="evidence" value="ECO:0007669"/>
    <property type="project" value="UniProtKB-KW"/>
</dbReference>
<dbReference type="GO" id="GO:0009229">
    <property type="term" value="P:thiamine diphosphate biosynthetic process"/>
    <property type="evidence" value="ECO:0007669"/>
    <property type="project" value="UniProtKB-UniPathway"/>
</dbReference>
<dbReference type="CDD" id="cd19360">
    <property type="entry name" value="TenA_C_SaTenA-like"/>
    <property type="match status" value="1"/>
</dbReference>
<dbReference type="Gene3D" id="1.20.910.10">
    <property type="entry name" value="Heme oxygenase-like"/>
    <property type="match status" value="1"/>
</dbReference>
<dbReference type="InterPro" id="IPR016084">
    <property type="entry name" value="Haem_Oase-like_multi-hlx"/>
</dbReference>
<dbReference type="InterPro" id="IPR004305">
    <property type="entry name" value="Thiaminase-2/PQQC"/>
</dbReference>
<dbReference type="InterPro" id="IPR027574">
    <property type="entry name" value="Thiaminase_II"/>
</dbReference>
<dbReference type="InterPro" id="IPR050967">
    <property type="entry name" value="Thiamine_Salvage_TenA"/>
</dbReference>
<dbReference type="NCBIfam" id="TIGR04306">
    <property type="entry name" value="salvage_TenA"/>
    <property type="match status" value="1"/>
</dbReference>
<dbReference type="PANTHER" id="PTHR43198">
    <property type="entry name" value="BIFUNCTIONAL TH2 PROTEIN"/>
    <property type="match status" value="1"/>
</dbReference>
<dbReference type="PANTHER" id="PTHR43198:SF2">
    <property type="entry name" value="SI:CH1073-67J19.1-RELATED"/>
    <property type="match status" value="1"/>
</dbReference>
<dbReference type="Pfam" id="PF03070">
    <property type="entry name" value="TENA_THI-4"/>
    <property type="match status" value="1"/>
</dbReference>
<dbReference type="SUPFAM" id="SSF48613">
    <property type="entry name" value="Heme oxygenase-like"/>
    <property type="match status" value="1"/>
</dbReference>
<feature type="chain" id="PRO_0000293615" description="Aminopyrimidine aminohydrolase">
    <location>
        <begin position="1"/>
        <end position="229"/>
    </location>
</feature>
<feature type="active site" description="Nucleophile" evidence="1">
    <location>
        <position position="137"/>
    </location>
</feature>
<feature type="active site" description="Proton donor" evidence="1">
    <location>
        <position position="208"/>
    </location>
</feature>
<feature type="binding site" evidence="1">
    <location>
        <position position="44"/>
    </location>
    <ligand>
        <name>substrate</name>
    </ligand>
</feature>
<feature type="binding site" evidence="1">
    <location>
        <position position="141"/>
    </location>
    <ligand>
        <name>substrate</name>
    </ligand>
</feature>
<feature type="binding site" evidence="1">
    <location>
        <position position="167"/>
    </location>
    <ligand>
        <name>substrate</name>
    </ligand>
</feature>
<feature type="site" description="Increases nucleophilicity of active site Cys" evidence="1">
    <location>
        <position position="47"/>
    </location>
</feature>
<feature type="helix" evidence="5">
    <location>
        <begin position="3"/>
        <end position="20"/>
    </location>
</feature>
<feature type="helix" evidence="5">
    <location>
        <begin position="22"/>
        <end position="28"/>
    </location>
</feature>
<feature type="helix" evidence="5">
    <location>
        <begin position="34"/>
        <end position="58"/>
    </location>
</feature>
<feature type="helix" evidence="5">
    <location>
        <begin position="59"/>
        <end position="61"/>
    </location>
</feature>
<feature type="helix" evidence="5">
    <location>
        <begin position="65"/>
        <end position="79"/>
    </location>
</feature>
<feature type="helix" evidence="5">
    <location>
        <begin position="84"/>
        <end position="92"/>
    </location>
</feature>
<feature type="helix" evidence="5">
    <location>
        <begin position="97"/>
        <end position="100"/>
    </location>
</feature>
<feature type="helix" evidence="5">
    <location>
        <begin position="108"/>
        <end position="123"/>
    </location>
</feature>
<feature type="helix" evidence="5">
    <location>
        <begin position="128"/>
        <end position="134"/>
    </location>
</feature>
<feature type="helix" evidence="5">
    <location>
        <begin position="136"/>
        <end position="150"/>
    </location>
</feature>
<feature type="helix" evidence="5">
    <location>
        <begin position="161"/>
        <end position="170"/>
    </location>
</feature>
<feature type="helix" evidence="5">
    <location>
        <begin position="172"/>
        <end position="185"/>
    </location>
</feature>
<feature type="turn" evidence="5">
    <location>
        <begin position="186"/>
        <end position="188"/>
    </location>
</feature>
<feature type="helix" evidence="5">
    <location>
        <begin position="191"/>
        <end position="217"/>
    </location>
</feature>
<organism>
    <name type="scientific">Staphylococcus epidermidis (strain ATCC 12228 / FDA PCI 1200)</name>
    <dbReference type="NCBI Taxonomy" id="176280"/>
    <lineage>
        <taxon>Bacteria</taxon>
        <taxon>Bacillati</taxon>
        <taxon>Bacillota</taxon>
        <taxon>Bacilli</taxon>
        <taxon>Bacillales</taxon>
        <taxon>Staphylococcaceae</taxon>
        <taxon>Staphylococcus</taxon>
    </lineage>
</organism>
<comment type="function">
    <text evidence="1 2">Catalyzes an amino-pyrimidine hydrolysis reaction at the C5' of the pyrimidine moiety of thiamine compounds, a reaction that is part of a thiamine salvage pathway. Thus, catalyzes the conversion of 4-amino-5-aminomethyl-2-methylpyrimidine to 4-amino-5-hydroxymethyl-2-methylpyrimidine (HMP). Is also able to catalyze the hydrolytic cleavage of thiamine; however, this thiaminase activity may not be physiologically relevant. Therefore, is probably involved in the regeneration of the thiamine pyrimidine from thiamine degraded products present in the environment, rather than in thiamine degradation.</text>
</comment>
<comment type="catalytic activity">
    <reaction evidence="1">
        <text>4-amino-5-aminomethyl-2-methylpyrimidine + H2O = 4-amino-5-hydroxymethyl-2-methylpyrimidine + NH4(+)</text>
        <dbReference type="Rhea" id="RHEA:31799"/>
        <dbReference type="ChEBI" id="CHEBI:15377"/>
        <dbReference type="ChEBI" id="CHEBI:16892"/>
        <dbReference type="ChEBI" id="CHEBI:28938"/>
        <dbReference type="ChEBI" id="CHEBI:63416"/>
        <dbReference type="EC" id="3.5.99.2"/>
    </reaction>
</comment>
<comment type="catalytic activity">
    <reaction evidence="2">
        <text>thiamine + H2O = 5-(2-hydroxyethyl)-4-methylthiazole + 4-amino-5-hydroxymethyl-2-methylpyrimidine + H(+)</text>
        <dbReference type="Rhea" id="RHEA:17509"/>
        <dbReference type="ChEBI" id="CHEBI:15377"/>
        <dbReference type="ChEBI" id="CHEBI:15378"/>
        <dbReference type="ChEBI" id="CHEBI:16892"/>
        <dbReference type="ChEBI" id="CHEBI:17957"/>
        <dbReference type="ChEBI" id="CHEBI:18385"/>
        <dbReference type="EC" id="3.5.99.2"/>
    </reaction>
</comment>
<comment type="pathway">
    <text evidence="1">Cofactor biosynthesis; thiamine diphosphate biosynthesis.</text>
</comment>
<comment type="subunit">
    <text evidence="3">Homotetramer.</text>
</comment>
<comment type="similarity">
    <text evidence="4">Belongs to the TenA family.</text>
</comment>
<protein>
    <recommendedName>
        <fullName evidence="1">Aminopyrimidine aminohydrolase</fullName>
        <ecNumber evidence="2">3.5.99.2</ecNumber>
    </recommendedName>
    <alternativeName>
        <fullName evidence="2">Thiaminase II</fullName>
    </alternativeName>
</protein>